<name>WHIA_STAAW</name>
<feature type="chain" id="PRO_0000376559" description="Probable cell division protein WhiA">
    <location>
        <begin position="1"/>
        <end position="314"/>
    </location>
</feature>
<feature type="DNA-binding region" description="H-T-H motif" evidence="1">
    <location>
        <begin position="274"/>
        <end position="308"/>
    </location>
</feature>
<comment type="function">
    <text evidence="1">Involved in cell division and chromosome segregation.</text>
</comment>
<comment type="similarity">
    <text evidence="1">Belongs to the WhiA family.</text>
</comment>
<evidence type="ECO:0000255" key="1">
    <source>
        <dbReference type="HAMAP-Rule" id="MF_01420"/>
    </source>
</evidence>
<dbReference type="EMBL" id="BA000033">
    <property type="protein sequence ID" value="BAB94594.1"/>
    <property type="molecule type" value="Genomic_DNA"/>
</dbReference>
<dbReference type="RefSeq" id="WP_000006551.1">
    <property type="nucleotide sequence ID" value="NC_003923.1"/>
</dbReference>
<dbReference type="SMR" id="Q7A1F7"/>
<dbReference type="KEGG" id="sam:MW0729"/>
<dbReference type="HOGENOM" id="CLU_053282_0_0_9"/>
<dbReference type="GO" id="GO:0003677">
    <property type="term" value="F:DNA binding"/>
    <property type="evidence" value="ECO:0007669"/>
    <property type="project" value="UniProtKB-UniRule"/>
</dbReference>
<dbReference type="GO" id="GO:0051301">
    <property type="term" value="P:cell division"/>
    <property type="evidence" value="ECO:0007669"/>
    <property type="project" value="UniProtKB-UniRule"/>
</dbReference>
<dbReference type="GO" id="GO:0043937">
    <property type="term" value="P:regulation of sporulation"/>
    <property type="evidence" value="ECO:0007669"/>
    <property type="project" value="InterPro"/>
</dbReference>
<dbReference type="FunFam" id="3.10.28.10:FF:000002">
    <property type="entry name" value="Probable cell division protein WhiA"/>
    <property type="match status" value="1"/>
</dbReference>
<dbReference type="Gene3D" id="3.10.28.10">
    <property type="entry name" value="Homing endonucleases"/>
    <property type="match status" value="1"/>
</dbReference>
<dbReference type="HAMAP" id="MF_01420">
    <property type="entry name" value="HTH_type_WhiA"/>
    <property type="match status" value="1"/>
</dbReference>
<dbReference type="InterPro" id="IPR027434">
    <property type="entry name" value="Homing_endonucl"/>
</dbReference>
<dbReference type="InterPro" id="IPR018478">
    <property type="entry name" value="Sporu_reg_WhiA_N_dom"/>
</dbReference>
<dbReference type="InterPro" id="IPR003802">
    <property type="entry name" value="Sporulation_regulator_WhiA"/>
</dbReference>
<dbReference type="InterPro" id="IPR023054">
    <property type="entry name" value="Sporulation_regulator_WhiA_C"/>
</dbReference>
<dbReference type="InterPro" id="IPR039518">
    <property type="entry name" value="WhiA_LAGLIDADG_dom"/>
</dbReference>
<dbReference type="NCBIfam" id="TIGR00647">
    <property type="entry name" value="DNA_bind_WhiA"/>
    <property type="match status" value="1"/>
</dbReference>
<dbReference type="PANTHER" id="PTHR37307">
    <property type="entry name" value="CELL DIVISION PROTEIN WHIA-RELATED"/>
    <property type="match status" value="1"/>
</dbReference>
<dbReference type="PANTHER" id="PTHR37307:SF1">
    <property type="entry name" value="CELL DIVISION PROTEIN WHIA-RELATED"/>
    <property type="match status" value="1"/>
</dbReference>
<dbReference type="Pfam" id="PF02650">
    <property type="entry name" value="HTH_WhiA"/>
    <property type="match status" value="1"/>
</dbReference>
<dbReference type="Pfam" id="PF14527">
    <property type="entry name" value="LAGLIDADG_WhiA"/>
    <property type="match status" value="1"/>
</dbReference>
<dbReference type="Pfam" id="PF10298">
    <property type="entry name" value="WhiA_N"/>
    <property type="match status" value="1"/>
</dbReference>
<dbReference type="SUPFAM" id="SSF55608">
    <property type="entry name" value="Homing endonucleases"/>
    <property type="match status" value="1"/>
</dbReference>
<organism>
    <name type="scientific">Staphylococcus aureus (strain MW2)</name>
    <dbReference type="NCBI Taxonomy" id="196620"/>
    <lineage>
        <taxon>Bacteria</taxon>
        <taxon>Bacillati</taxon>
        <taxon>Bacillota</taxon>
        <taxon>Bacilli</taxon>
        <taxon>Bacillales</taxon>
        <taxon>Staphylococcaceae</taxon>
        <taxon>Staphylococcus</taxon>
    </lineage>
</organism>
<sequence>MSFASEMKNELTRIDVDEMNAKAELSALIRMNGALSLSNQQFVINVQTENATTARRIYSLIKRVFNVEVEILVRKKMKLKKNNIYICRTKMKAKEILDELGILKDGIFTHEIDHSMIQDDEMRRSYLRGAFLAGGSVNNPETSSYHLEIFSQNESHAEGLTKLMNSYELNAKHLERKKGSITYLKEAEKISDFLSLIGGYQALLKFEDVRIVRDMRNSVNRLVNCETANLNKTVSAAMKQVESIKLIDKEIGIENLPDRLREIARIRVEHQEISLKELGEMVSTGPISKSGVNHRLRKLNDLADKIRNGEQIEL</sequence>
<accession>Q7A1F7</accession>
<keyword id="KW-0131">Cell cycle</keyword>
<keyword id="KW-0132">Cell division</keyword>
<keyword id="KW-0238">DNA-binding</keyword>
<reference key="1">
    <citation type="journal article" date="2002" name="Lancet">
        <title>Genome and virulence determinants of high virulence community-acquired MRSA.</title>
        <authorList>
            <person name="Baba T."/>
            <person name="Takeuchi F."/>
            <person name="Kuroda M."/>
            <person name="Yuzawa H."/>
            <person name="Aoki K."/>
            <person name="Oguchi A."/>
            <person name="Nagai Y."/>
            <person name="Iwama N."/>
            <person name="Asano K."/>
            <person name="Naimi T."/>
            <person name="Kuroda H."/>
            <person name="Cui L."/>
            <person name="Yamamoto K."/>
            <person name="Hiramatsu K."/>
        </authorList>
    </citation>
    <scope>NUCLEOTIDE SEQUENCE [LARGE SCALE GENOMIC DNA]</scope>
    <source>
        <strain>MW2</strain>
    </source>
</reference>
<gene>
    <name evidence="1" type="primary">whiA</name>
    <name type="ordered locus">MW0729</name>
</gene>
<protein>
    <recommendedName>
        <fullName evidence="1">Probable cell division protein WhiA</fullName>
    </recommendedName>
</protein>
<proteinExistence type="inferred from homology"/>